<evidence type="ECO:0000250" key="1"/>
<evidence type="ECO:0000305" key="2"/>
<sequence length="91" mass="10259">MPRSLKKGPFLDLHLLKKVEKAVESGDKKPIKTWSRRSMIIPSMIGLTIAVHNGRQHVPVYVSDEMIGHKLGEFAPTRTYRGHAADKKAKK</sequence>
<protein>
    <recommendedName>
        <fullName evidence="2">Small ribosomal subunit protein uS19</fullName>
    </recommendedName>
    <alternativeName>
        <fullName>30S ribosomal protein S19</fullName>
    </alternativeName>
</protein>
<feature type="initiator methionine" description="Removed" evidence="1">
    <location>
        <position position="1"/>
    </location>
</feature>
<feature type="chain" id="PRO_0000129831" description="Small ribosomal subunit protein uS19">
    <location>
        <begin position="2"/>
        <end position="91"/>
    </location>
</feature>
<reference key="1">
    <citation type="journal article" date="1995" name="Science">
        <title>Whole-genome random sequencing and assembly of Haemophilus influenzae Rd.</title>
        <authorList>
            <person name="Fleischmann R.D."/>
            <person name="Adams M.D."/>
            <person name="White O."/>
            <person name="Clayton R.A."/>
            <person name="Kirkness E.F."/>
            <person name="Kerlavage A.R."/>
            <person name="Bult C.J."/>
            <person name="Tomb J.-F."/>
            <person name="Dougherty B.A."/>
            <person name="Merrick J.M."/>
            <person name="McKenney K."/>
            <person name="Sutton G.G."/>
            <person name="FitzHugh W."/>
            <person name="Fields C.A."/>
            <person name="Gocayne J.D."/>
            <person name="Scott J.D."/>
            <person name="Shirley R."/>
            <person name="Liu L.-I."/>
            <person name="Glodek A."/>
            <person name="Kelley J.M."/>
            <person name="Weidman J.F."/>
            <person name="Phillips C.A."/>
            <person name="Spriggs T."/>
            <person name="Hedblom E."/>
            <person name="Cotton M.D."/>
            <person name="Utterback T.R."/>
            <person name="Hanna M.C."/>
            <person name="Nguyen D.T."/>
            <person name="Saudek D.M."/>
            <person name="Brandon R.C."/>
            <person name="Fine L.D."/>
            <person name="Fritchman J.L."/>
            <person name="Fuhrmann J.L."/>
            <person name="Geoghagen N.S.M."/>
            <person name="Gnehm C.L."/>
            <person name="McDonald L.A."/>
            <person name="Small K.V."/>
            <person name="Fraser C.M."/>
            <person name="Smith H.O."/>
            <person name="Venter J.C."/>
        </authorList>
    </citation>
    <scope>NUCLEOTIDE SEQUENCE [LARGE SCALE GENOMIC DNA]</scope>
    <source>
        <strain>ATCC 51907 / DSM 11121 / KW20 / Rd</strain>
    </source>
</reference>
<accession>P67899</accession>
<accession>P44385</accession>
<organism>
    <name type="scientific">Haemophilus influenzae (strain ATCC 51907 / DSM 11121 / KW20 / Rd)</name>
    <dbReference type="NCBI Taxonomy" id="71421"/>
    <lineage>
        <taxon>Bacteria</taxon>
        <taxon>Pseudomonadati</taxon>
        <taxon>Pseudomonadota</taxon>
        <taxon>Gammaproteobacteria</taxon>
        <taxon>Pasteurellales</taxon>
        <taxon>Pasteurellaceae</taxon>
        <taxon>Haemophilus</taxon>
    </lineage>
</organism>
<keyword id="KW-1185">Reference proteome</keyword>
<keyword id="KW-0687">Ribonucleoprotein</keyword>
<keyword id="KW-0689">Ribosomal protein</keyword>
<keyword id="KW-0694">RNA-binding</keyword>
<keyword id="KW-0699">rRNA-binding</keyword>
<dbReference type="EMBL" id="L42023">
    <property type="protein sequence ID" value="AAC22440.1"/>
    <property type="molecule type" value="Genomic_DNA"/>
</dbReference>
<dbReference type="PIR" id="I64092">
    <property type="entry name" value="I64092"/>
</dbReference>
<dbReference type="RefSeq" id="NP_438940.1">
    <property type="nucleotide sequence ID" value="NC_000907.1"/>
</dbReference>
<dbReference type="SMR" id="P67899"/>
<dbReference type="STRING" id="71421.HI_0781"/>
<dbReference type="EnsemblBacteria" id="AAC22440">
    <property type="protein sequence ID" value="AAC22440"/>
    <property type="gene ID" value="HI_0781"/>
</dbReference>
<dbReference type="KEGG" id="hin:HI_0781"/>
<dbReference type="PATRIC" id="fig|71421.8.peg.820"/>
<dbReference type="eggNOG" id="COG0185">
    <property type="taxonomic scope" value="Bacteria"/>
</dbReference>
<dbReference type="HOGENOM" id="CLU_144911_0_1_6"/>
<dbReference type="OrthoDB" id="9797833at2"/>
<dbReference type="PhylomeDB" id="P67899"/>
<dbReference type="BioCyc" id="HINF71421:G1GJ1-821-MONOMER"/>
<dbReference type="PRO" id="PR:P67899"/>
<dbReference type="Proteomes" id="UP000000579">
    <property type="component" value="Chromosome"/>
</dbReference>
<dbReference type="GO" id="GO:0005737">
    <property type="term" value="C:cytoplasm"/>
    <property type="evidence" value="ECO:0007669"/>
    <property type="project" value="UniProtKB-ARBA"/>
</dbReference>
<dbReference type="GO" id="GO:0015935">
    <property type="term" value="C:small ribosomal subunit"/>
    <property type="evidence" value="ECO:0007669"/>
    <property type="project" value="InterPro"/>
</dbReference>
<dbReference type="GO" id="GO:0019843">
    <property type="term" value="F:rRNA binding"/>
    <property type="evidence" value="ECO:0007669"/>
    <property type="project" value="UniProtKB-UniRule"/>
</dbReference>
<dbReference type="GO" id="GO:0003735">
    <property type="term" value="F:structural constituent of ribosome"/>
    <property type="evidence" value="ECO:0000318"/>
    <property type="project" value="GO_Central"/>
</dbReference>
<dbReference type="GO" id="GO:0000028">
    <property type="term" value="P:ribosomal small subunit assembly"/>
    <property type="evidence" value="ECO:0000318"/>
    <property type="project" value="GO_Central"/>
</dbReference>
<dbReference type="GO" id="GO:0006412">
    <property type="term" value="P:translation"/>
    <property type="evidence" value="ECO:0007669"/>
    <property type="project" value="UniProtKB-UniRule"/>
</dbReference>
<dbReference type="FunFam" id="3.30.860.10:FF:000001">
    <property type="entry name" value="30S ribosomal protein S19"/>
    <property type="match status" value="1"/>
</dbReference>
<dbReference type="Gene3D" id="3.30.860.10">
    <property type="entry name" value="30s Ribosomal Protein S19, Chain A"/>
    <property type="match status" value="1"/>
</dbReference>
<dbReference type="HAMAP" id="MF_00531">
    <property type="entry name" value="Ribosomal_uS19"/>
    <property type="match status" value="1"/>
</dbReference>
<dbReference type="InterPro" id="IPR002222">
    <property type="entry name" value="Ribosomal_uS19"/>
</dbReference>
<dbReference type="InterPro" id="IPR005732">
    <property type="entry name" value="Ribosomal_uS19_bac-type"/>
</dbReference>
<dbReference type="InterPro" id="IPR020934">
    <property type="entry name" value="Ribosomal_uS19_CS"/>
</dbReference>
<dbReference type="InterPro" id="IPR023575">
    <property type="entry name" value="Ribosomal_uS19_SF"/>
</dbReference>
<dbReference type="NCBIfam" id="TIGR01050">
    <property type="entry name" value="rpsS_bact"/>
    <property type="match status" value="1"/>
</dbReference>
<dbReference type="PANTHER" id="PTHR11880">
    <property type="entry name" value="RIBOSOMAL PROTEIN S19P FAMILY MEMBER"/>
    <property type="match status" value="1"/>
</dbReference>
<dbReference type="PANTHER" id="PTHR11880:SF8">
    <property type="entry name" value="SMALL RIBOSOMAL SUBUNIT PROTEIN US19M"/>
    <property type="match status" value="1"/>
</dbReference>
<dbReference type="Pfam" id="PF00203">
    <property type="entry name" value="Ribosomal_S19"/>
    <property type="match status" value="1"/>
</dbReference>
<dbReference type="PIRSF" id="PIRSF002144">
    <property type="entry name" value="Ribosomal_S19"/>
    <property type="match status" value="1"/>
</dbReference>
<dbReference type="PRINTS" id="PR00975">
    <property type="entry name" value="RIBOSOMALS19"/>
</dbReference>
<dbReference type="SUPFAM" id="SSF54570">
    <property type="entry name" value="Ribosomal protein S19"/>
    <property type="match status" value="1"/>
</dbReference>
<dbReference type="PROSITE" id="PS00323">
    <property type="entry name" value="RIBOSOMAL_S19"/>
    <property type="match status" value="1"/>
</dbReference>
<proteinExistence type="inferred from homology"/>
<comment type="function">
    <text evidence="1">Protein S19 forms a complex with S13 that binds strongly to the 16S ribosomal RNA.</text>
</comment>
<comment type="similarity">
    <text evidence="2">Belongs to the universal ribosomal protein uS19 family.</text>
</comment>
<name>RS19_HAEIN</name>
<gene>
    <name type="primary">rpsS</name>
    <name type="synonym">rps19</name>
    <name type="ordered locus">HI_0781</name>
</gene>